<proteinExistence type="inferred from homology"/>
<accession>Q8X6Z5</accession>
<evidence type="ECO:0000255" key="1">
    <source>
        <dbReference type="HAMAP-Rule" id="MF_01009"/>
    </source>
</evidence>
<organism>
    <name type="scientific">Escherichia coli O157:H7</name>
    <dbReference type="NCBI Taxonomy" id="83334"/>
    <lineage>
        <taxon>Bacteria</taxon>
        <taxon>Pseudomonadati</taxon>
        <taxon>Pseudomonadota</taxon>
        <taxon>Gammaproteobacteria</taxon>
        <taxon>Enterobacterales</taxon>
        <taxon>Enterobacteriaceae</taxon>
        <taxon>Escherichia</taxon>
    </lineage>
</organism>
<feature type="chain" id="PRO_0000200554" description="Thiosulfate sulfurtransferase GlpE">
    <location>
        <begin position="1"/>
        <end position="108"/>
    </location>
</feature>
<feature type="domain" description="Rhodanese" evidence="1">
    <location>
        <begin position="17"/>
        <end position="105"/>
    </location>
</feature>
<feature type="active site" description="Cysteine persulfide intermediate" evidence="1">
    <location>
        <position position="65"/>
    </location>
</feature>
<keyword id="KW-0963">Cytoplasm</keyword>
<keyword id="KW-1185">Reference proteome</keyword>
<keyword id="KW-0808">Transferase</keyword>
<sequence>MDQFECINVADAHQKLQEKEAVLVDIRDPQSFAMGHAVQAFHLTNDTLGAFMRNNDFDTPVMVMCYHGNSSKGAAQYLLQQGYDVVYSIDGGFEAWQRQFPAEVAYGA</sequence>
<comment type="function">
    <text evidence="1">Transferase that catalyzes the transfer of sulfur from thiosulfate to thiophilic acceptors such as cyanide or dithiols. May function in a CysM-independent thiosulfate assimilation pathway by catalyzing the conversion of thiosulfate to sulfite, which can then be used for L-cysteine biosynthesis.</text>
</comment>
<comment type="catalytic activity">
    <reaction evidence="1">
        <text>thiosulfate + hydrogen cyanide = thiocyanate + sulfite + 2 H(+)</text>
        <dbReference type="Rhea" id="RHEA:16881"/>
        <dbReference type="ChEBI" id="CHEBI:15378"/>
        <dbReference type="ChEBI" id="CHEBI:17359"/>
        <dbReference type="ChEBI" id="CHEBI:18022"/>
        <dbReference type="ChEBI" id="CHEBI:18407"/>
        <dbReference type="ChEBI" id="CHEBI:33542"/>
        <dbReference type="EC" id="2.8.1.1"/>
    </reaction>
</comment>
<comment type="catalytic activity">
    <reaction evidence="1">
        <text>thiosulfate + [thioredoxin]-dithiol = [thioredoxin]-disulfide + hydrogen sulfide + sulfite + 2 H(+)</text>
        <dbReference type="Rhea" id="RHEA:83859"/>
        <dbReference type="Rhea" id="RHEA-COMP:10698"/>
        <dbReference type="Rhea" id="RHEA-COMP:10700"/>
        <dbReference type="ChEBI" id="CHEBI:15378"/>
        <dbReference type="ChEBI" id="CHEBI:17359"/>
        <dbReference type="ChEBI" id="CHEBI:29919"/>
        <dbReference type="ChEBI" id="CHEBI:29950"/>
        <dbReference type="ChEBI" id="CHEBI:33542"/>
        <dbReference type="ChEBI" id="CHEBI:50058"/>
    </reaction>
</comment>
<comment type="subcellular location">
    <subcellularLocation>
        <location evidence="1">Cytoplasm</location>
    </subcellularLocation>
</comment>
<comment type="similarity">
    <text evidence="1">Belongs to the GlpE family.</text>
</comment>
<reference key="1">
    <citation type="journal article" date="2001" name="Nature">
        <title>Genome sequence of enterohaemorrhagic Escherichia coli O157:H7.</title>
        <authorList>
            <person name="Perna N.T."/>
            <person name="Plunkett G. III"/>
            <person name="Burland V."/>
            <person name="Mau B."/>
            <person name="Glasner J.D."/>
            <person name="Rose D.J."/>
            <person name="Mayhew G.F."/>
            <person name="Evans P.S."/>
            <person name="Gregor J."/>
            <person name="Kirkpatrick H.A."/>
            <person name="Posfai G."/>
            <person name="Hackett J."/>
            <person name="Klink S."/>
            <person name="Boutin A."/>
            <person name="Shao Y."/>
            <person name="Miller L."/>
            <person name="Grotbeck E.J."/>
            <person name="Davis N.W."/>
            <person name="Lim A."/>
            <person name="Dimalanta E.T."/>
            <person name="Potamousis K."/>
            <person name="Apodaca J."/>
            <person name="Anantharaman T.S."/>
            <person name="Lin J."/>
            <person name="Yen G."/>
            <person name="Schwartz D.C."/>
            <person name="Welch R.A."/>
            <person name="Blattner F.R."/>
        </authorList>
    </citation>
    <scope>NUCLEOTIDE SEQUENCE [LARGE SCALE GENOMIC DNA]</scope>
    <source>
        <strain>O157:H7 / EDL933 / ATCC 700927 / EHEC</strain>
    </source>
</reference>
<reference key="2">
    <citation type="journal article" date="2001" name="DNA Res.">
        <title>Complete genome sequence of enterohemorrhagic Escherichia coli O157:H7 and genomic comparison with a laboratory strain K-12.</title>
        <authorList>
            <person name="Hayashi T."/>
            <person name="Makino K."/>
            <person name="Ohnishi M."/>
            <person name="Kurokawa K."/>
            <person name="Ishii K."/>
            <person name="Yokoyama K."/>
            <person name="Han C.-G."/>
            <person name="Ohtsubo E."/>
            <person name="Nakayama K."/>
            <person name="Murata T."/>
            <person name="Tanaka M."/>
            <person name="Tobe T."/>
            <person name="Iida T."/>
            <person name="Takami H."/>
            <person name="Honda T."/>
            <person name="Sasakawa C."/>
            <person name="Ogasawara N."/>
            <person name="Yasunaga T."/>
            <person name="Kuhara S."/>
            <person name="Shiba T."/>
            <person name="Hattori M."/>
            <person name="Shinagawa H."/>
        </authorList>
    </citation>
    <scope>NUCLEOTIDE SEQUENCE [LARGE SCALE GENOMIC DNA]</scope>
    <source>
        <strain>O157:H7 / Sakai / RIMD 0509952 / EHEC</strain>
    </source>
</reference>
<name>GLPE_ECO57</name>
<dbReference type="EC" id="2.8.1.1" evidence="1"/>
<dbReference type="EMBL" id="AE005174">
    <property type="protein sequence ID" value="AAG58529.1"/>
    <property type="molecule type" value="Genomic_DNA"/>
</dbReference>
<dbReference type="EMBL" id="BA000007">
    <property type="protein sequence ID" value="BAB37691.1"/>
    <property type="molecule type" value="Genomic_DNA"/>
</dbReference>
<dbReference type="PIR" id="D91162">
    <property type="entry name" value="D91162"/>
</dbReference>
<dbReference type="PIR" id="E86008">
    <property type="entry name" value="E86008"/>
</dbReference>
<dbReference type="RefSeq" id="NP_312295.1">
    <property type="nucleotide sequence ID" value="NC_002695.1"/>
</dbReference>
<dbReference type="RefSeq" id="WP_000371930.1">
    <property type="nucleotide sequence ID" value="NZ_VOAI01000004.1"/>
</dbReference>
<dbReference type="SMR" id="Q8X6Z5"/>
<dbReference type="STRING" id="155864.Z4785"/>
<dbReference type="GeneID" id="915874"/>
<dbReference type="KEGG" id="ece:Z4785"/>
<dbReference type="KEGG" id="ecs:ECs_4268"/>
<dbReference type="PATRIC" id="fig|386585.9.peg.4458"/>
<dbReference type="eggNOG" id="COG0607">
    <property type="taxonomic scope" value="Bacteria"/>
</dbReference>
<dbReference type="HOGENOM" id="CLU_089574_14_0_6"/>
<dbReference type="OMA" id="VCYHGIS"/>
<dbReference type="Proteomes" id="UP000000558">
    <property type="component" value="Chromosome"/>
</dbReference>
<dbReference type="Proteomes" id="UP000002519">
    <property type="component" value="Chromosome"/>
</dbReference>
<dbReference type="GO" id="GO:0005737">
    <property type="term" value="C:cytoplasm"/>
    <property type="evidence" value="ECO:0007669"/>
    <property type="project" value="UniProtKB-SubCell"/>
</dbReference>
<dbReference type="GO" id="GO:0004792">
    <property type="term" value="F:thiosulfate-cyanide sulfurtransferase activity"/>
    <property type="evidence" value="ECO:0007669"/>
    <property type="project" value="UniProtKB-UniRule"/>
</dbReference>
<dbReference type="GO" id="GO:0006071">
    <property type="term" value="P:glycerol metabolic process"/>
    <property type="evidence" value="ECO:0007669"/>
    <property type="project" value="UniProtKB-UniRule"/>
</dbReference>
<dbReference type="CDD" id="cd01444">
    <property type="entry name" value="GlpE_ST"/>
    <property type="match status" value="1"/>
</dbReference>
<dbReference type="FunFam" id="3.40.250.10:FF:000007">
    <property type="entry name" value="Thiosulfate sulfurtransferase GlpE"/>
    <property type="match status" value="1"/>
</dbReference>
<dbReference type="Gene3D" id="3.40.250.10">
    <property type="entry name" value="Rhodanese-like domain"/>
    <property type="match status" value="1"/>
</dbReference>
<dbReference type="HAMAP" id="MF_01009">
    <property type="entry name" value="Thiosulf_sulfurtr"/>
    <property type="match status" value="1"/>
</dbReference>
<dbReference type="InterPro" id="IPR050229">
    <property type="entry name" value="GlpE_sulfurtransferase"/>
</dbReference>
<dbReference type="InterPro" id="IPR001763">
    <property type="entry name" value="Rhodanese-like_dom"/>
</dbReference>
<dbReference type="InterPro" id="IPR036873">
    <property type="entry name" value="Rhodanese-like_dom_sf"/>
</dbReference>
<dbReference type="InterPro" id="IPR023695">
    <property type="entry name" value="Thiosulf_sulfurTrfase"/>
</dbReference>
<dbReference type="NCBIfam" id="NF001195">
    <property type="entry name" value="PRK00162.1"/>
    <property type="match status" value="1"/>
</dbReference>
<dbReference type="PANTHER" id="PTHR43031">
    <property type="entry name" value="FAD-DEPENDENT OXIDOREDUCTASE"/>
    <property type="match status" value="1"/>
</dbReference>
<dbReference type="PANTHER" id="PTHR43031:SF6">
    <property type="entry name" value="THIOSULFATE SULFURTRANSFERASE GLPE"/>
    <property type="match status" value="1"/>
</dbReference>
<dbReference type="Pfam" id="PF00581">
    <property type="entry name" value="Rhodanese"/>
    <property type="match status" value="1"/>
</dbReference>
<dbReference type="SMART" id="SM00450">
    <property type="entry name" value="RHOD"/>
    <property type="match status" value="1"/>
</dbReference>
<dbReference type="SUPFAM" id="SSF52821">
    <property type="entry name" value="Rhodanese/Cell cycle control phosphatase"/>
    <property type="match status" value="1"/>
</dbReference>
<dbReference type="PROSITE" id="PS50206">
    <property type="entry name" value="RHODANESE_3"/>
    <property type="match status" value="1"/>
</dbReference>
<protein>
    <recommendedName>
        <fullName evidence="1">Thiosulfate sulfurtransferase GlpE</fullName>
        <ecNumber evidence="1">2.8.1.1</ecNumber>
    </recommendedName>
</protein>
<gene>
    <name evidence="1" type="primary">glpE</name>
    <name type="ordered locus">Z4785</name>
    <name type="ordered locus">ECs4268</name>
</gene>